<keyword id="KW-0963">Cytoplasm</keyword>
<keyword id="KW-0671">Queuosine biosynthesis</keyword>
<keyword id="KW-1185">Reference proteome</keyword>
<keyword id="KW-0949">S-adenosyl-L-methionine</keyword>
<keyword id="KW-0808">Transferase</keyword>
<proteinExistence type="inferred from homology"/>
<protein>
    <recommendedName>
        <fullName evidence="1">S-adenosylmethionine:tRNA ribosyltransferase-isomerase</fullName>
        <ecNumber evidence="1">2.4.99.17</ecNumber>
    </recommendedName>
    <alternativeName>
        <fullName evidence="1">Queuosine biosynthesis protein QueA</fullName>
    </alternativeName>
</protein>
<name>QUEA_ECOK1</name>
<sequence>MRVTDFSFELPESLIAHYPMPERSSCRLLSLDGPTGALTHGTFTDLLDKLNPGDLLVFNNTRVIPARLFGRKASGGKIEVLVERMLDEKRILAHIRASKAPKPGAELLLGDDESINATMTARHGALFEVEFNDDRSVLDILNSIGHIPLPPYIDRPDEDADRELYQTVYSEKPGAVAAPTAGLHFDEPLLEKLRAKGVEMAFVTLHVGAGTFQPVRVDTIEDHIMHSEYAEVPQDVVEAVLAAKARGNRVIAVGTTSVRSLESAAQAAKNDLIEPFFDDTQIFIYPGFQYKVVDALVTNFHLPESTLIMLVSAFAGYQHTMNAYKAAVEEKYRFFSYGDAMFITYNPQAINERVGE</sequence>
<accession>A1A875</accession>
<organism>
    <name type="scientific">Escherichia coli O1:K1 / APEC</name>
    <dbReference type="NCBI Taxonomy" id="405955"/>
    <lineage>
        <taxon>Bacteria</taxon>
        <taxon>Pseudomonadati</taxon>
        <taxon>Pseudomonadota</taxon>
        <taxon>Gammaproteobacteria</taxon>
        <taxon>Enterobacterales</taxon>
        <taxon>Enterobacteriaceae</taxon>
        <taxon>Escherichia</taxon>
    </lineage>
</organism>
<evidence type="ECO:0000255" key="1">
    <source>
        <dbReference type="HAMAP-Rule" id="MF_00113"/>
    </source>
</evidence>
<reference key="1">
    <citation type="journal article" date="2007" name="J. Bacteriol.">
        <title>The genome sequence of avian pathogenic Escherichia coli strain O1:K1:H7 shares strong similarities with human extraintestinal pathogenic E. coli genomes.</title>
        <authorList>
            <person name="Johnson T.J."/>
            <person name="Kariyawasam S."/>
            <person name="Wannemuehler Y."/>
            <person name="Mangiamele P."/>
            <person name="Johnson S.J."/>
            <person name="Doetkott C."/>
            <person name="Skyberg J.A."/>
            <person name="Lynne A.M."/>
            <person name="Johnson J.R."/>
            <person name="Nolan L.K."/>
        </authorList>
    </citation>
    <scope>NUCLEOTIDE SEQUENCE [LARGE SCALE GENOMIC DNA]</scope>
</reference>
<feature type="chain" id="PRO_1000015209" description="S-adenosylmethionine:tRNA ribosyltransferase-isomerase">
    <location>
        <begin position="1"/>
        <end position="356"/>
    </location>
</feature>
<dbReference type="EC" id="2.4.99.17" evidence="1"/>
<dbReference type="EMBL" id="CP000468">
    <property type="protein sequence ID" value="ABI99864.1"/>
    <property type="molecule type" value="Genomic_DNA"/>
</dbReference>
<dbReference type="RefSeq" id="WP_001266512.1">
    <property type="nucleotide sequence ID" value="NZ_CADILS010000009.1"/>
</dbReference>
<dbReference type="SMR" id="A1A875"/>
<dbReference type="KEGG" id="ecv:APECO1_1605"/>
<dbReference type="HOGENOM" id="CLU_039110_1_0_6"/>
<dbReference type="UniPathway" id="UPA00392"/>
<dbReference type="Proteomes" id="UP000008216">
    <property type="component" value="Chromosome"/>
</dbReference>
<dbReference type="GO" id="GO:0005737">
    <property type="term" value="C:cytoplasm"/>
    <property type="evidence" value="ECO:0007669"/>
    <property type="project" value="UniProtKB-SubCell"/>
</dbReference>
<dbReference type="GO" id="GO:0051075">
    <property type="term" value="F:S-adenosylmethionine:tRNA ribosyltransferase-isomerase activity"/>
    <property type="evidence" value="ECO:0007669"/>
    <property type="project" value="UniProtKB-EC"/>
</dbReference>
<dbReference type="GO" id="GO:0008616">
    <property type="term" value="P:queuosine biosynthetic process"/>
    <property type="evidence" value="ECO:0007669"/>
    <property type="project" value="UniProtKB-UniRule"/>
</dbReference>
<dbReference type="GO" id="GO:0002099">
    <property type="term" value="P:tRNA wobble guanine modification"/>
    <property type="evidence" value="ECO:0007669"/>
    <property type="project" value="TreeGrafter"/>
</dbReference>
<dbReference type="FunFam" id="2.40.10.240:FF:000001">
    <property type="entry name" value="S-adenosylmethionine:tRNA ribosyltransferase-isomerase"/>
    <property type="match status" value="1"/>
</dbReference>
<dbReference type="FunFam" id="3.40.1780.10:FF:000001">
    <property type="entry name" value="S-adenosylmethionine:tRNA ribosyltransferase-isomerase"/>
    <property type="match status" value="1"/>
</dbReference>
<dbReference type="Gene3D" id="2.40.10.240">
    <property type="entry name" value="QueA-like"/>
    <property type="match status" value="1"/>
</dbReference>
<dbReference type="Gene3D" id="3.40.1780.10">
    <property type="entry name" value="QueA-like"/>
    <property type="match status" value="1"/>
</dbReference>
<dbReference type="HAMAP" id="MF_00113">
    <property type="entry name" value="QueA"/>
    <property type="match status" value="1"/>
</dbReference>
<dbReference type="InterPro" id="IPR003699">
    <property type="entry name" value="QueA"/>
</dbReference>
<dbReference type="InterPro" id="IPR042118">
    <property type="entry name" value="QueA_dom1"/>
</dbReference>
<dbReference type="InterPro" id="IPR042119">
    <property type="entry name" value="QueA_dom2"/>
</dbReference>
<dbReference type="InterPro" id="IPR036100">
    <property type="entry name" value="QueA_sf"/>
</dbReference>
<dbReference type="NCBIfam" id="NF001140">
    <property type="entry name" value="PRK00147.1"/>
    <property type="match status" value="1"/>
</dbReference>
<dbReference type="NCBIfam" id="TIGR00113">
    <property type="entry name" value="queA"/>
    <property type="match status" value="1"/>
</dbReference>
<dbReference type="PANTHER" id="PTHR30307">
    <property type="entry name" value="S-ADENOSYLMETHIONINE:TRNA RIBOSYLTRANSFERASE-ISOMERASE"/>
    <property type="match status" value="1"/>
</dbReference>
<dbReference type="PANTHER" id="PTHR30307:SF0">
    <property type="entry name" value="S-ADENOSYLMETHIONINE:TRNA RIBOSYLTRANSFERASE-ISOMERASE"/>
    <property type="match status" value="1"/>
</dbReference>
<dbReference type="Pfam" id="PF02547">
    <property type="entry name" value="Queuosine_synth"/>
    <property type="match status" value="1"/>
</dbReference>
<dbReference type="SUPFAM" id="SSF111337">
    <property type="entry name" value="QueA-like"/>
    <property type="match status" value="1"/>
</dbReference>
<gene>
    <name evidence="1" type="primary">queA</name>
    <name type="ordered locus">Ecok1_03710</name>
    <name type="ORF">APECO1_1605</name>
</gene>
<comment type="function">
    <text evidence="1">Transfers and isomerizes the ribose moiety from AdoMet to the 7-aminomethyl group of 7-deazaguanine (preQ1-tRNA) to give epoxyqueuosine (oQ-tRNA).</text>
</comment>
<comment type="catalytic activity">
    <reaction evidence="1">
        <text>7-aminomethyl-7-carbaguanosine(34) in tRNA + S-adenosyl-L-methionine = epoxyqueuosine(34) in tRNA + adenine + L-methionine + 2 H(+)</text>
        <dbReference type="Rhea" id="RHEA:32155"/>
        <dbReference type="Rhea" id="RHEA-COMP:10342"/>
        <dbReference type="Rhea" id="RHEA-COMP:18582"/>
        <dbReference type="ChEBI" id="CHEBI:15378"/>
        <dbReference type="ChEBI" id="CHEBI:16708"/>
        <dbReference type="ChEBI" id="CHEBI:57844"/>
        <dbReference type="ChEBI" id="CHEBI:59789"/>
        <dbReference type="ChEBI" id="CHEBI:82833"/>
        <dbReference type="ChEBI" id="CHEBI:194443"/>
        <dbReference type="EC" id="2.4.99.17"/>
    </reaction>
</comment>
<comment type="pathway">
    <text evidence="1">tRNA modification; tRNA-queuosine biosynthesis.</text>
</comment>
<comment type="subunit">
    <text evidence="1">Monomer.</text>
</comment>
<comment type="subcellular location">
    <subcellularLocation>
        <location evidence="1">Cytoplasm</location>
    </subcellularLocation>
</comment>
<comment type="similarity">
    <text evidence="1">Belongs to the QueA family.</text>
</comment>